<feature type="chain" id="PRO_0000058545" description="Endopolyphosphatase">
    <location>
        <begin position="1"/>
        <end position="678"/>
    </location>
</feature>
<feature type="topological domain" description="Cytoplasmic" evidence="2">
    <location>
        <begin position="1"/>
        <end position="2"/>
    </location>
</feature>
<feature type="transmembrane region" description="Helical; Signal-anchor for type II membrane protein" evidence="2">
    <location>
        <begin position="3"/>
        <end position="23"/>
    </location>
</feature>
<feature type="topological domain" description="Vacuolar" evidence="2">
    <location>
        <begin position="24"/>
        <end position="678"/>
    </location>
</feature>
<feature type="region of interest" description="Disordered" evidence="3">
    <location>
        <begin position="70"/>
        <end position="109"/>
    </location>
</feature>
<feature type="region of interest" description="Disordered" evidence="3">
    <location>
        <begin position="504"/>
        <end position="547"/>
    </location>
</feature>
<feature type="compositionally biased region" description="Basic and acidic residues" evidence="3">
    <location>
        <begin position="87"/>
        <end position="103"/>
    </location>
</feature>
<feature type="compositionally biased region" description="Basic residues" evidence="3">
    <location>
        <begin position="529"/>
        <end position="543"/>
    </location>
</feature>
<feature type="glycosylation site" description="N-linked (GlcNAc...) asparagine" evidence="2">
    <location>
        <position position="138"/>
    </location>
</feature>
<feature type="glycosylation site" description="N-linked (GlcNAc...) asparagine" evidence="2">
    <location>
        <position position="369"/>
    </location>
</feature>
<feature type="glycosylation site" description="N-linked (GlcNAc...) asparagine" evidence="2">
    <location>
        <position position="447"/>
    </location>
</feature>
<feature type="glycosylation site" description="N-linked (GlcNAc...) asparagine" evidence="2">
    <location>
        <position position="591"/>
    </location>
</feature>
<feature type="glycosylation site" description="N-linked (GlcNAc...) asparagine" evidence="2">
    <location>
        <position position="616"/>
    </location>
</feature>
<dbReference type="EC" id="3.6.1.10"/>
<dbReference type="EMBL" id="AE017345">
    <property type="protein sequence ID" value="AAW43547.1"/>
    <property type="molecule type" value="Genomic_DNA"/>
</dbReference>
<dbReference type="RefSeq" id="XP_570854.1">
    <property type="nucleotide sequence ID" value="XM_570854.1"/>
</dbReference>
<dbReference type="SMR" id="Q5KH67"/>
<dbReference type="FunCoup" id="Q5KH67">
    <property type="interactions" value="50"/>
</dbReference>
<dbReference type="STRING" id="214684.Q5KH67"/>
<dbReference type="GlyCosmos" id="Q5KH67">
    <property type="glycosylation" value="5 sites, No reported glycans"/>
</dbReference>
<dbReference type="PaxDb" id="214684-Q5KH67"/>
<dbReference type="EnsemblFungi" id="AAW43547">
    <property type="protein sequence ID" value="AAW43547"/>
    <property type="gene ID" value="CNE01080"/>
</dbReference>
<dbReference type="VEuPathDB" id="FungiDB:CNE01080"/>
<dbReference type="eggNOG" id="KOG3770">
    <property type="taxonomic scope" value="Eukaryota"/>
</dbReference>
<dbReference type="HOGENOM" id="CLU_013424_2_0_1"/>
<dbReference type="InParanoid" id="Q5KH67"/>
<dbReference type="OMA" id="LRFQDTI"/>
<dbReference type="OrthoDB" id="348678at2759"/>
<dbReference type="Proteomes" id="UP000002149">
    <property type="component" value="Chromosome 5"/>
</dbReference>
<dbReference type="GO" id="GO:0000324">
    <property type="term" value="C:fungal-type vacuole"/>
    <property type="evidence" value="ECO:0000318"/>
    <property type="project" value="GO_Central"/>
</dbReference>
<dbReference type="GO" id="GO:0005774">
    <property type="term" value="C:vacuolar membrane"/>
    <property type="evidence" value="ECO:0007669"/>
    <property type="project" value="UniProtKB-SubCell"/>
</dbReference>
<dbReference type="GO" id="GO:0000298">
    <property type="term" value="F:endopolyphosphatase activity"/>
    <property type="evidence" value="ECO:0000318"/>
    <property type="project" value="GO_Central"/>
</dbReference>
<dbReference type="GO" id="GO:0004309">
    <property type="term" value="F:exopolyphosphatase activity"/>
    <property type="evidence" value="ECO:0000318"/>
    <property type="project" value="GO_Central"/>
</dbReference>
<dbReference type="GO" id="GO:0006798">
    <property type="term" value="P:polyphosphate catabolic process"/>
    <property type="evidence" value="ECO:0000318"/>
    <property type="project" value="GO_Central"/>
</dbReference>
<dbReference type="CDD" id="cd00842">
    <property type="entry name" value="MPP_ASMase"/>
    <property type="match status" value="1"/>
</dbReference>
<dbReference type="Gene3D" id="3.60.21.10">
    <property type="match status" value="1"/>
</dbReference>
<dbReference type="InterPro" id="IPR041805">
    <property type="entry name" value="ASMase/PPN1_MPP"/>
</dbReference>
<dbReference type="InterPro" id="IPR012358">
    <property type="entry name" value="EndopolyPtase_N1"/>
</dbReference>
<dbReference type="InterPro" id="IPR029052">
    <property type="entry name" value="Metallo-depent_PP-like"/>
</dbReference>
<dbReference type="PANTHER" id="PTHR10340:SF55">
    <property type="entry name" value="ENDOPOLYPHOSPHATASE"/>
    <property type="match status" value="1"/>
</dbReference>
<dbReference type="PANTHER" id="PTHR10340">
    <property type="entry name" value="SPHINGOMYELIN PHOSPHODIESTERASE"/>
    <property type="match status" value="1"/>
</dbReference>
<dbReference type="PIRSF" id="PIRSF027093">
    <property type="entry name" value="EndopolyPtase_N1"/>
    <property type="match status" value="1"/>
</dbReference>
<dbReference type="SUPFAM" id="SSF56300">
    <property type="entry name" value="Metallo-dependent phosphatases"/>
    <property type="match status" value="1"/>
</dbReference>
<name>PPN1_CRYNJ</name>
<proteinExistence type="inferred from homology"/>
<keyword id="KW-0325">Glycoprotein</keyword>
<keyword id="KW-0378">Hydrolase</keyword>
<keyword id="KW-0472">Membrane</keyword>
<keyword id="KW-1185">Reference proteome</keyword>
<keyword id="KW-0735">Signal-anchor</keyword>
<keyword id="KW-0812">Transmembrane</keyword>
<keyword id="KW-1133">Transmembrane helix</keyword>
<keyword id="KW-0926">Vacuole</keyword>
<organism>
    <name type="scientific">Cryptococcus neoformans var. neoformans serotype D (strain JEC21 / ATCC MYA-565)</name>
    <name type="common">Filobasidiella neoformans</name>
    <dbReference type="NCBI Taxonomy" id="214684"/>
    <lineage>
        <taxon>Eukaryota</taxon>
        <taxon>Fungi</taxon>
        <taxon>Dikarya</taxon>
        <taxon>Basidiomycota</taxon>
        <taxon>Agaricomycotina</taxon>
        <taxon>Tremellomycetes</taxon>
        <taxon>Tremellales</taxon>
        <taxon>Cryptococcaceae</taxon>
        <taxon>Cryptococcus</taxon>
        <taxon>Cryptococcus neoformans species complex</taxon>
    </lineage>
</organism>
<sequence>MRSPLLASLFALALSIASSEAAISSTEQVPLSGSVPQLDHSELQNVRINKKRPLKGRFLHITDIHPDPHYKTGSTFDSGCHRKPKKDGKSEGKKATENERGNEDLDDKEFDTLIKNEDLAGKWGTAVSDCDCPMSLVNITFDWLKEEWANEVDFVVWTGDNARHDIDRRIPRTPKEIFDSNRMIVDRMLDAFGRDMPIVPSIGNNDIYPHNVLAAGPSRITEEFLLIWKHFIPSEAAHVFERGAYFSVEVIPDRLAVISLNTLFWYDANTLVDGCRDHSNDPGALEMDWLEVQLNNFRQRGMQVWLTGHVPPHMNHYYDNCYLRYGDLALRYQDTIVGHLFGHMNVDHFFFIDVDELEATSELTSTSSNTTLSDLPLLHGPRLPRPGPGKYTAMGRSGARKLEEELRKDFGQMPGPGILKLKDYAVMNVAPSVIPTYYPGIRIFSYNISDEEDSFDQGHSYQGADELLDDEDEGDELEELELPSDNGFFGGLDERENEDIEILKGSGGHRHDVPKGDCSLPSNEDKPHCTFKRKPRHYSKRSPSRTNRALSPLGYTQFYLPSMMKQKKRPKWEVEYTTYKVKTLVPSSPENTTQPLPVPLHLLPRYDPSIFSKPKNKTEEKEVAKKTAKFYKAVKAVTPYRMKDLTIGSWVKLARMLVLEKKRWKKFAELMLVSTETD</sequence>
<evidence type="ECO:0000250" key="1">
    <source>
        <dbReference type="UniProtKB" id="Q04119"/>
    </source>
</evidence>
<evidence type="ECO:0000255" key="2"/>
<evidence type="ECO:0000256" key="3">
    <source>
        <dbReference type="SAM" id="MobiDB-lite"/>
    </source>
</evidence>
<evidence type="ECO:0000305" key="4"/>
<accession>Q5KH67</accession>
<comment type="function">
    <text evidence="1">Catalyzes the hydrolysis of inorganic polyphosphate (polyP) chains of many hundreds of phosphate residues into shorter lengths.</text>
</comment>
<comment type="catalytic activity">
    <reaction evidence="1">
        <text>[phosphate](n+1) + n H2O = (n+1) phosphate + n H(+)</text>
        <dbReference type="Rhea" id="RHEA:22452"/>
        <dbReference type="Rhea" id="RHEA-COMP:14280"/>
        <dbReference type="ChEBI" id="CHEBI:15377"/>
        <dbReference type="ChEBI" id="CHEBI:15378"/>
        <dbReference type="ChEBI" id="CHEBI:16838"/>
        <dbReference type="ChEBI" id="CHEBI:43474"/>
        <dbReference type="EC" id="3.6.1.10"/>
    </reaction>
</comment>
<comment type="cofactor">
    <cofactor evidence="1">
        <name>a divalent metal cation</name>
        <dbReference type="ChEBI" id="CHEBI:60240"/>
    </cofactor>
</comment>
<comment type="subcellular location">
    <subcellularLocation>
        <location evidence="1">Vacuole membrane</location>
        <topology evidence="1">Single-pass type II membrane protein</topology>
    </subcellularLocation>
</comment>
<comment type="PTM">
    <text evidence="1">Processing by proteases in the vacuole may be required for activation.</text>
</comment>
<comment type="similarity">
    <text evidence="4">Belongs to the endopolyphosphatase PPN1 family.</text>
</comment>
<gene>
    <name type="primary">PPN1</name>
    <name type="ordered locus">CNE01080</name>
</gene>
<protein>
    <recommendedName>
        <fullName>Endopolyphosphatase</fullName>
        <ecNumber>3.6.1.10</ecNumber>
    </recommendedName>
</protein>
<reference key="1">
    <citation type="journal article" date="2005" name="Science">
        <title>The genome of the basidiomycetous yeast and human pathogen Cryptococcus neoformans.</title>
        <authorList>
            <person name="Loftus B.J."/>
            <person name="Fung E."/>
            <person name="Roncaglia P."/>
            <person name="Rowley D."/>
            <person name="Amedeo P."/>
            <person name="Bruno D."/>
            <person name="Vamathevan J."/>
            <person name="Miranda M."/>
            <person name="Anderson I.J."/>
            <person name="Fraser J.A."/>
            <person name="Allen J.E."/>
            <person name="Bosdet I.E."/>
            <person name="Brent M.R."/>
            <person name="Chiu R."/>
            <person name="Doering T.L."/>
            <person name="Donlin M.J."/>
            <person name="D'Souza C.A."/>
            <person name="Fox D.S."/>
            <person name="Grinberg V."/>
            <person name="Fu J."/>
            <person name="Fukushima M."/>
            <person name="Haas B.J."/>
            <person name="Huang J.C."/>
            <person name="Janbon G."/>
            <person name="Jones S.J.M."/>
            <person name="Koo H.L."/>
            <person name="Krzywinski M.I."/>
            <person name="Kwon-Chung K.J."/>
            <person name="Lengeler K.B."/>
            <person name="Maiti R."/>
            <person name="Marra M.A."/>
            <person name="Marra R.E."/>
            <person name="Mathewson C.A."/>
            <person name="Mitchell T.G."/>
            <person name="Pertea M."/>
            <person name="Riggs F.R."/>
            <person name="Salzberg S.L."/>
            <person name="Schein J.E."/>
            <person name="Shvartsbeyn A."/>
            <person name="Shin H."/>
            <person name="Shumway M."/>
            <person name="Specht C.A."/>
            <person name="Suh B.B."/>
            <person name="Tenney A."/>
            <person name="Utterback T.R."/>
            <person name="Wickes B.L."/>
            <person name="Wortman J.R."/>
            <person name="Wye N.H."/>
            <person name="Kronstad J.W."/>
            <person name="Lodge J.K."/>
            <person name="Heitman J."/>
            <person name="Davis R.W."/>
            <person name="Fraser C.M."/>
            <person name="Hyman R.W."/>
        </authorList>
    </citation>
    <scope>NUCLEOTIDE SEQUENCE [LARGE SCALE GENOMIC DNA]</scope>
    <source>
        <strain>JEC21 / ATCC MYA-565</strain>
    </source>
</reference>